<proteinExistence type="inferred from homology"/>
<name>RBSA_YERPA</name>
<accession>Q1C1B8</accession>
<reference key="1">
    <citation type="journal article" date="2006" name="J. Bacteriol.">
        <title>Complete genome sequence of Yersinia pestis strains Antiqua and Nepal516: evidence of gene reduction in an emerging pathogen.</title>
        <authorList>
            <person name="Chain P.S.G."/>
            <person name="Hu P."/>
            <person name="Malfatti S.A."/>
            <person name="Radnedge L."/>
            <person name="Larimer F."/>
            <person name="Vergez L.M."/>
            <person name="Worsham P."/>
            <person name="Chu M.C."/>
            <person name="Andersen G.L."/>
        </authorList>
    </citation>
    <scope>NUCLEOTIDE SEQUENCE [LARGE SCALE GENOMIC DNA]</scope>
    <source>
        <strain>Antiqua</strain>
    </source>
</reference>
<organism>
    <name type="scientific">Yersinia pestis bv. Antiqua (strain Antiqua)</name>
    <dbReference type="NCBI Taxonomy" id="360102"/>
    <lineage>
        <taxon>Bacteria</taxon>
        <taxon>Pseudomonadati</taxon>
        <taxon>Pseudomonadota</taxon>
        <taxon>Gammaproteobacteria</taxon>
        <taxon>Enterobacterales</taxon>
        <taxon>Yersiniaceae</taxon>
        <taxon>Yersinia</taxon>
    </lineage>
</organism>
<dbReference type="EC" id="7.5.2.7" evidence="1"/>
<dbReference type="EMBL" id="CP000308">
    <property type="protein sequence ID" value="ABG15754.1"/>
    <property type="molecule type" value="Genomic_DNA"/>
</dbReference>
<dbReference type="RefSeq" id="WP_002209523.1">
    <property type="nucleotide sequence ID" value="NZ_CP009906.1"/>
</dbReference>
<dbReference type="SMR" id="Q1C1B8"/>
<dbReference type="KEGG" id="ypa:YPA_3792"/>
<dbReference type="Proteomes" id="UP000001971">
    <property type="component" value="Chromosome"/>
</dbReference>
<dbReference type="GO" id="GO:0005886">
    <property type="term" value="C:plasma membrane"/>
    <property type="evidence" value="ECO:0007669"/>
    <property type="project" value="UniProtKB-SubCell"/>
</dbReference>
<dbReference type="GO" id="GO:0015611">
    <property type="term" value="F:ABC-type D-ribose transporter activity"/>
    <property type="evidence" value="ECO:0007669"/>
    <property type="project" value="UniProtKB-EC"/>
</dbReference>
<dbReference type="GO" id="GO:0005524">
    <property type="term" value="F:ATP binding"/>
    <property type="evidence" value="ECO:0007669"/>
    <property type="project" value="UniProtKB-KW"/>
</dbReference>
<dbReference type="GO" id="GO:0016887">
    <property type="term" value="F:ATP hydrolysis activity"/>
    <property type="evidence" value="ECO:0007669"/>
    <property type="project" value="InterPro"/>
</dbReference>
<dbReference type="CDD" id="cd03216">
    <property type="entry name" value="ABC_Carb_Monos_I"/>
    <property type="match status" value="1"/>
</dbReference>
<dbReference type="CDD" id="cd03215">
    <property type="entry name" value="ABC_Carb_Monos_II"/>
    <property type="match status" value="1"/>
</dbReference>
<dbReference type="FunFam" id="3.40.50.300:FF:000127">
    <property type="entry name" value="Ribose import ATP-binding protein RbsA"/>
    <property type="match status" value="1"/>
</dbReference>
<dbReference type="Gene3D" id="3.40.50.300">
    <property type="entry name" value="P-loop containing nucleotide triphosphate hydrolases"/>
    <property type="match status" value="2"/>
</dbReference>
<dbReference type="InterPro" id="IPR003593">
    <property type="entry name" value="AAA+_ATPase"/>
</dbReference>
<dbReference type="InterPro" id="IPR050107">
    <property type="entry name" value="ABC_carbohydrate_import_ATPase"/>
</dbReference>
<dbReference type="InterPro" id="IPR003439">
    <property type="entry name" value="ABC_transporter-like_ATP-bd"/>
</dbReference>
<dbReference type="InterPro" id="IPR017871">
    <property type="entry name" value="ABC_transporter-like_CS"/>
</dbReference>
<dbReference type="InterPro" id="IPR027417">
    <property type="entry name" value="P-loop_NTPase"/>
</dbReference>
<dbReference type="PANTHER" id="PTHR43790">
    <property type="entry name" value="CARBOHYDRATE TRANSPORT ATP-BINDING PROTEIN MG119-RELATED"/>
    <property type="match status" value="1"/>
</dbReference>
<dbReference type="PANTHER" id="PTHR43790:SF3">
    <property type="entry name" value="D-ALLOSE IMPORT ATP-BINDING PROTEIN ALSA-RELATED"/>
    <property type="match status" value="1"/>
</dbReference>
<dbReference type="Pfam" id="PF00005">
    <property type="entry name" value="ABC_tran"/>
    <property type="match status" value="2"/>
</dbReference>
<dbReference type="SMART" id="SM00382">
    <property type="entry name" value="AAA"/>
    <property type="match status" value="2"/>
</dbReference>
<dbReference type="SUPFAM" id="SSF52540">
    <property type="entry name" value="P-loop containing nucleoside triphosphate hydrolases"/>
    <property type="match status" value="2"/>
</dbReference>
<dbReference type="PROSITE" id="PS00211">
    <property type="entry name" value="ABC_TRANSPORTER_1"/>
    <property type="match status" value="1"/>
</dbReference>
<dbReference type="PROSITE" id="PS50893">
    <property type="entry name" value="ABC_TRANSPORTER_2"/>
    <property type="match status" value="2"/>
</dbReference>
<dbReference type="PROSITE" id="PS51254">
    <property type="entry name" value="RBSA"/>
    <property type="match status" value="1"/>
</dbReference>
<keyword id="KW-0067">ATP-binding</keyword>
<keyword id="KW-0997">Cell inner membrane</keyword>
<keyword id="KW-1003">Cell membrane</keyword>
<keyword id="KW-0472">Membrane</keyword>
<keyword id="KW-0547">Nucleotide-binding</keyword>
<keyword id="KW-0677">Repeat</keyword>
<keyword id="KW-0762">Sugar transport</keyword>
<keyword id="KW-1278">Translocase</keyword>
<keyword id="KW-0813">Transport</keyword>
<feature type="chain" id="PRO_0000277517" description="Ribose import ATP-binding protein RbsA">
    <location>
        <begin position="1"/>
        <end position="507"/>
    </location>
</feature>
<feature type="domain" description="ABC transporter 1" evidence="1">
    <location>
        <begin position="7"/>
        <end position="242"/>
    </location>
</feature>
<feature type="domain" description="ABC transporter 2" evidence="1">
    <location>
        <begin position="253"/>
        <end position="497"/>
    </location>
</feature>
<feature type="binding site" evidence="1">
    <location>
        <begin position="39"/>
        <end position="46"/>
    </location>
    <ligand>
        <name>ATP</name>
        <dbReference type="ChEBI" id="CHEBI:30616"/>
    </ligand>
</feature>
<protein>
    <recommendedName>
        <fullName evidence="1">Ribose import ATP-binding protein RbsA</fullName>
        <ecNumber evidence="1">7.5.2.7</ecNumber>
    </recommendedName>
</protein>
<comment type="function">
    <text evidence="1">Part of the ABC transporter complex RbsABC involved in ribose import. Responsible for energy coupling to the transport system.</text>
</comment>
<comment type="catalytic activity">
    <reaction evidence="1">
        <text>D-ribose(out) + ATP + H2O = D-ribose(in) + ADP + phosphate + H(+)</text>
        <dbReference type="Rhea" id="RHEA:29903"/>
        <dbReference type="ChEBI" id="CHEBI:15377"/>
        <dbReference type="ChEBI" id="CHEBI:15378"/>
        <dbReference type="ChEBI" id="CHEBI:30616"/>
        <dbReference type="ChEBI" id="CHEBI:43474"/>
        <dbReference type="ChEBI" id="CHEBI:47013"/>
        <dbReference type="ChEBI" id="CHEBI:456216"/>
        <dbReference type="EC" id="7.5.2.7"/>
    </reaction>
</comment>
<comment type="subunit">
    <text evidence="1">The complex is composed of an ATP-binding protein (RbsA), two transmembrane proteins (RbsC) and a solute-binding protein (RbsB).</text>
</comment>
<comment type="subcellular location">
    <subcellularLocation>
        <location evidence="1">Cell inner membrane</location>
        <topology evidence="1">Peripheral membrane protein</topology>
    </subcellularLocation>
</comment>
<comment type="similarity">
    <text evidence="1">Belongs to the ABC transporter superfamily. Ribose importer (TC 3.A.1.2.1) family.</text>
</comment>
<sequence>MNKVPLLEMRNITKSFGKFQALKGVDLTVFSGEIHALMGENGAGKSTLMKILAGAYTTTSGEILIEGRPWSIKGPKDALNAGISLIYQEMQLAPNLTVAENIFLGSELSRGGLVQRKEMVMQTQAVIDRLGAQFKASDLVMGLTIAEQQQVEIARALHRNSRILVMDEPTAALSTRETHRLFELILRLRDEGMAIIYISHRMAEVYELSDRVSVLRDGQYVGSLMRANLNANELVRMMVGRPLSDLFNKERDIPLGHLRLKVHHLTDGAKVQAVSLQVRSGEIVGLAGLVGAGRSELAQLIFGVRKATGGTIEIDGVPLVIHSPREAIRHGIGFLTENRKEQGLFLELAAQDNITMATLERDACYGLLDRKKARAISDDAINRLNIRVPHAQVRAGGLSGGNQQKLLISRWVAISPRILILDEPTRGVDVGAKSEIYRIMSQMAREGVAILMISSELPEVVGMSDRVYVMHEGRIAGELHHPDITQENIMTLATGVTEDHKKEVYHD</sequence>
<evidence type="ECO:0000255" key="1">
    <source>
        <dbReference type="HAMAP-Rule" id="MF_01716"/>
    </source>
</evidence>
<gene>
    <name evidence="1" type="primary">rbsA</name>
    <name type="ordered locus">YPA_3792</name>
</gene>